<protein>
    <recommendedName>
        <fullName>Extracellular matrix-binding protein EbhA</fullName>
    </recommendedName>
    <alternativeName>
        <fullName>ECM-binding protein homolog A</fullName>
    </alternativeName>
</protein>
<accession>A7X2C3</accession>
<gene>
    <name type="primary">ebhA</name>
    <name type="ordered locus">SAHV_1422</name>
</gene>
<feature type="chain" id="PRO_0000345969" description="Extracellular matrix-binding protein EbhA">
    <location>
        <begin position="1"/>
        <end position="6713"/>
    </location>
</feature>
<feature type="transmembrane region" description="Helical" evidence="1">
    <location>
        <begin position="6518"/>
        <end position="6540"/>
    </location>
</feature>
<feature type="domain" description="FIVAR 1">
    <location>
        <begin position="1"/>
        <end position="58"/>
    </location>
</feature>
<feature type="domain" description="FIVAR 2">
    <location>
        <begin position="126"/>
        <end position="184"/>
    </location>
</feature>
<feature type="domain" description="FIVAR 3">
    <location>
        <begin position="252"/>
        <end position="310"/>
    </location>
</feature>
<feature type="domain" description="FIVAR 4">
    <location>
        <begin position="378"/>
        <end position="436"/>
    </location>
</feature>
<feature type="domain" description="FIVAR 5">
    <location>
        <begin position="504"/>
        <end position="562"/>
    </location>
</feature>
<feature type="domain" description="FIVAR 6">
    <location>
        <begin position="630"/>
        <end position="688"/>
    </location>
</feature>
<feature type="domain" description="FIVAR 7">
    <location>
        <begin position="756"/>
        <end position="814"/>
    </location>
</feature>
<feature type="domain" description="FIVAR 8">
    <location>
        <begin position="882"/>
        <end position="940"/>
    </location>
</feature>
<feature type="domain" description="FIVAR 9">
    <location>
        <begin position="1008"/>
        <end position="1066"/>
    </location>
</feature>
<feature type="domain" description="FIVAR 10">
    <location>
        <begin position="1134"/>
        <end position="1192"/>
    </location>
</feature>
<feature type="domain" description="FIVAR 11">
    <location>
        <begin position="1260"/>
        <end position="1318"/>
    </location>
</feature>
<feature type="domain" description="FIVAR 12">
    <location>
        <begin position="1386"/>
        <end position="1444"/>
    </location>
</feature>
<feature type="domain" description="FIVAR 13">
    <location>
        <begin position="1512"/>
        <end position="1570"/>
    </location>
</feature>
<feature type="domain" description="FIVAR 14">
    <location>
        <begin position="1638"/>
        <end position="1696"/>
    </location>
</feature>
<feature type="domain" description="FIVAR 15">
    <location>
        <begin position="1764"/>
        <end position="1822"/>
    </location>
</feature>
<feature type="domain" description="FIVAR 16">
    <location>
        <begin position="1890"/>
        <end position="1948"/>
    </location>
</feature>
<feature type="domain" description="FIVAR 17">
    <location>
        <begin position="2142"/>
        <end position="2200"/>
    </location>
</feature>
<feature type="domain" description="FIVAR 18">
    <location>
        <begin position="2268"/>
        <end position="2325"/>
    </location>
</feature>
<feature type="domain" description="FIVAR 19">
    <location>
        <begin position="2393"/>
        <end position="2451"/>
    </location>
</feature>
<feature type="domain" description="FIVAR 20">
    <location>
        <begin position="2519"/>
        <end position="2577"/>
    </location>
</feature>
<feature type="domain" description="FIVAR 21">
    <location>
        <begin position="2645"/>
        <end position="2703"/>
    </location>
</feature>
<feature type="domain" description="FIVAR 22">
    <location>
        <begin position="2771"/>
        <end position="2829"/>
    </location>
</feature>
<feature type="domain" description="FIVAR 23">
    <location>
        <begin position="2897"/>
        <end position="2955"/>
    </location>
</feature>
<feature type="domain" description="FIVAR 24">
    <location>
        <begin position="3023"/>
        <end position="3081"/>
    </location>
</feature>
<feature type="domain" description="FIVAR 25">
    <location>
        <begin position="3149"/>
        <end position="3207"/>
    </location>
</feature>
<feature type="domain" description="FIVAR 26">
    <location>
        <begin position="3275"/>
        <end position="3333"/>
    </location>
</feature>
<feature type="domain" description="FIVAR 27">
    <location>
        <begin position="3401"/>
        <end position="3459"/>
    </location>
</feature>
<feature type="domain" description="FIVAR 28">
    <location>
        <begin position="3527"/>
        <end position="3585"/>
    </location>
</feature>
<feature type="domain" description="FIVAR 29">
    <location>
        <begin position="3653"/>
        <end position="3711"/>
    </location>
</feature>
<feature type="domain" description="FIVAR 30">
    <location>
        <begin position="3779"/>
        <end position="3837"/>
    </location>
</feature>
<feature type="domain" description="FIVAR 31">
    <location>
        <begin position="3905"/>
        <end position="3963"/>
    </location>
</feature>
<feature type="domain" description="FIVAR 32">
    <location>
        <begin position="4031"/>
        <end position="4089"/>
    </location>
</feature>
<feature type="domain" description="FIVAR 33">
    <location>
        <begin position="4157"/>
        <end position="4218"/>
    </location>
</feature>
<feature type="domain" description="FIVAR 34">
    <location>
        <begin position="4283"/>
        <end position="4341"/>
    </location>
</feature>
<feature type="domain" description="FIVAR 35">
    <location>
        <begin position="4409"/>
        <end position="4467"/>
    </location>
</feature>
<feature type="domain" description="FIVAR 36">
    <location>
        <begin position="4535"/>
        <end position="4592"/>
    </location>
</feature>
<feature type="domain" description="FIVAR 37">
    <location>
        <begin position="4660"/>
        <end position="4718"/>
    </location>
</feature>
<feature type="domain" description="FIVAR 38">
    <location>
        <begin position="4786"/>
        <end position="4844"/>
    </location>
</feature>
<feature type="domain" description="FIVAR 39">
    <location>
        <begin position="4912"/>
        <end position="4970"/>
    </location>
</feature>
<feature type="domain" description="FIVAR 40">
    <location>
        <begin position="5038"/>
        <end position="5096"/>
    </location>
</feature>
<feature type="domain" description="FIVAR 41">
    <location>
        <begin position="5164"/>
        <end position="5222"/>
    </location>
</feature>
<feature type="domain" description="FIVAR 42">
    <location>
        <begin position="5290"/>
        <end position="5344"/>
    </location>
</feature>
<feature type="domain" description="FIVAR 43">
    <location>
        <begin position="5412"/>
        <end position="5471"/>
    </location>
</feature>
<feature type="domain" description="FIVAR 44">
    <location>
        <begin position="5666"/>
        <end position="5722"/>
    </location>
</feature>
<feature type="region of interest" description="Disordered" evidence="2">
    <location>
        <begin position="6616"/>
        <end position="6713"/>
    </location>
</feature>
<feature type="compositionally biased region" description="Basic and acidic residues" evidence="2">
    <location>
        <begin position="6631"/>
        <end position="6641"/>
    </location>
</feature>
<feature type="compositionally biased region" description="Basic and acidic residues" evidence="2">
    <location>
        <begin position="6680"/>
        <end position="6690"/>
    </location>
</feature>
<feature type="compositionally biased region" description="Basic residues" evidence="2">
    <location>
        <begin position="6695"/>
        <end position="6713"/>
    </location>
</feature>
<keyword id="KW-1003">Cell membrane</keyword>
<keyword id="KW-0472">Membrane</keyword>
<keyword id="KW-0677">Repeat</keyword>
<keyword id="KW-0812">Transmembrane</keyword>
<keyword id="KW-1133">Transmembrane helix</keyword>
<dbReference type="EMBL" id="AP009324">
    <property type="protein sequence ID" value="BAF78305.1"/>
    <property type="molecule type" value="Genomic_DNA"/>
</dbReference>
<dbReference type="SMR" id="A7X2C3"/>
<dbReference type="KEGG" id="saw:SAHV_1422"/>
<dbReference type="HOGENOM" id="CLU_000041_0_0_9"/>
<dbReference type="GO" id="GO:0005886">
    <property type="term" value="C:plasma membrane"/>
    <property type="evidence" value="ECO:0007669"/>
    <property type="project" value="UniProtKB-SubCell"/>
</dbReference>
<dbReference type="Gene3D" id="1.20.120.1850">
    <property type="entry name" value="Ebh helix bundles repeating unit (S and A modules)"/>
    <property type="match status" value="7"/>
</dbReference>
<dbReference type="Gene3D" id="1.20.5.420">
    <property type="entry name" value="Immunoglobulin FC, subunit C"/>
    <property type="match status" value="78"/>
</dbReference>
<dbReference type="InterPro" id="IPR011439">
    <property type="entry name" value="DUF1542"/>
</dbReference>
<dbReference type="InterPro" id="IPR051197">
    <property type="entry name" value="ECM-binding_protein"/>
</dbReference>
<dbReference type="InterPro" id="IPR020840">
    <property type="entry name" value="Extracell_matrix-bd_GA"/>
</dbReference>
<dbReference type="InterPro" id="IPR002988">
    <property type="entry name" value="GA_module"/>
</dbReference>
<dbReference type="InterPro" id="IPR009063">
    <property type="entry name" value="Ig/albumin-bd_sf"/>
</dbReference>
<dbReference type="PANTHER" id="PTHR33150">
    <property type="entry name" value="EXTRACELLULAR MATRIX-BINDING PROTEIN EBH"/>
    <property type="match status" value="1"/>
</dbReference>
<dbReference type="PANTHER" id="PTHR33150:SF1">
    <property type="entry name" value="EXTRACELLULAR MATRIX-BINDING PROTEIN EBH"/>
    <property type="match status" value="1"/>
</dbReference>
<dbReference type="Pfam" id="PF07564">
    <property type="entry name" value="DUF1542"/>
    <property type="match status" value="8"/>
</dbReference>
<dbReference type="Pfam" id="PF07554">
    <property type="entry name" value="FIVAR"/>
    <property type="match status" value="39"/>
</dbReference>
<dbReference type="Pfam" id="PF01468">
    <property type="entry name" value="GA"/>
    <property type="match status" value="11"/>
</dbReference>
<dbReference type="SMART" id="SM00844">
    <property type="entry name" value="GA"/>
    <property type="match status" value="46"/>
</dbReference>
<dbReference type="SUPFAM" id="SSF46997">
    <property type="entry name" value="Bacterial immunoglobulin/albumin-binding domains"/>
    <property type="match status" value="91"/>
</dbReference>
<comment type="subcellular location">
    <subcellularLocation>
        <location evidence="3">Cell membrane</location>
        <topology evidence="3">Single-pass membrane protein</topology>
    </subcellularLocation>
</comment>
<comment type="caution">
    <text evidence="3">In strains Mu3, Mu50, N315 and Newman, ebh is divided into two ORFs, ebhA and ebhB, which correspond to the C-terminal and N-terminal parts of the full gene, respectively.</text>
</comment>
<name>EBHA_STAA1</name>
<sequence>MGNLQTAINDKSGTLASQNFLDADEQKRNAYNQAISAAETILNKQTGPNTAKTAVEQALNNVNSAKHALNGTQNLNNAKQAAITAINGASDLNQKQKDALKAQANGAQRVSNANDVQRNATELNTAMGQLQHAIADKTNTLASSKYVNADSTKQNAYTTKVTNAEHIISGTPTVVTTPSEVTAAANQVNSAKQELNGDERLRVAKQNANTAIDALTQLNTPQKAKLKEQVGQANRLEDVQSVQTNGQSLNNAMKGLRDSIANETTVKASQNYTDASPNNQSTYNSAVSNAKGIINQTNNPTMDTSAITQATTQVNNAKNGLNGAENLRNAQNTAKQNLNTLSHLTNNQKSAISSQIDRAGHVSEVTAAKNAATELNAQMGNLEQAIHDQNTVKQGVNFTDADKAKRDAYTNAVSRAETILNKTQGANTSKQDVEAAIQNVTSAKNALNGDQNVTNAKNAAKNALNNLTSINNAQKRDLTTKIDQATTVAGVEAVSNTGTQLNTAMANLQNGINDKANTLASENYHDADSDKKTAYTQAVTNAENILNKNSGSNLDKAAVENALSQVTNAKGALNGNHNLEQAKSNANTTINGLQHLTTAQKDKLKQQVQQAQNVAGVDTVKSSANTLNGAMGTLRNSIQDNTATKNGQNYLDATERNKTNYNNAVDSANGVINATSNPNMDANAINQIATQVTSTKNALDGTHNLTQAKQTATNAIDGATNLNKAQKDALKAQVTSAQRVANVTSIQQTANELNTAMGQLQHGIDDENATKQTQKYRDAEQSKKTAYDQAVAAAKAILNKQTGSNSDKAAVDRALQQVTSTKDALNGDAKLAEAKAAARQNLGTLNHITNAQRTALEGQINQATTVDGVNTVKTNANTLDGAMNSLQGAINDKDATLRNQNYLDADESKRNAYTQAVTAAEGILNKQTGGNTSKADVDNALNAVTRAKAALNGAENLRNAKTSATNTINGLPNLTQLQKDNLKHQVEQAQNVVGVNGVKDKGNTLNTAMGALRTSIQNDNTTKTSQNYLDASDSNKNNYNTAVNNANGVINATNNPNMDANAINDMANQVNTTKAALNGAQNLAQAKTNATNTINNAQDLNQKQKDALKTQVNNAQRVSDANNVQHTATELNGAMTALKAAIADKERTKASGNYVNADQEKRQAYDSKVTNAENIINGTPNATLTVNDVNSAASQVNAAKTALNGDNNLRVAKEHANNTIDGLAQLNNVQKAKLKEQVQSATTLDGVQTVKNSSQTLNTAMKGLRDSIANEATIKAGQNYTDASPNNRNEYDSAVTAAKAIINQTSNPTMEPNTITQATSQVTTKEHALNGAQNLAQAKTTAKNNLNNLTSINNAQKDALTRNIDGATTVAGVNQETAKATELNNAMHSLQNGINDETQTKQTQKYLDAEPSKKSAYDQAVNAAKAILTKASGQNVDKAAVEQALQNVNSTKTALNGDAKLNEAKAAAKQTLGTLTHINNAQRNALDNEITQATNVEGVNTVKAKAQQLDGAMGQLETSIRDKDTTLQSQNYQDADDAKRTAYSQAVNAAATILNKTAGGNTPKADVERAMQAVTQANTALNGIQNLERAKQAANTAITNASDLNTKQKEALKAQVTSAGRVSAANGVEHTATELNTAMTALKRAIADKADTKASGNYVNADANKRQAYDEKVTAAEHIVSGTPTPTLTPSDVTNAATQVTNAKTQLNGNHNLEVAKQNANTAIDGLTSLNGPQKAKLKEQVGQATTLPNVQTVRDNAQTLNTAMKGLRDSIANEATIKAGQNYTDASQNKQNDYNNAVTAAKAIIGQTTSPSMIAQEINQAKDQVTAKQQALNGQENLRTAQTNAKQHLNGLSDLTNAQKDAAKRQIEGATHVNEVTQAQNNADALNTAMTNLKNGIQDQNTIKQGVNFTDADEAKRNAYTNAVTQAEQILNKAQGPNTAKDGVETALQNVQRAKNELNGNQNVANAKTTAKNALNNLTSINNAQKAALKSQIEGATTVAGVNQVSTMASELNTAMSNLQRGINDEAATKAAQKYTEADRDKQTAYNDAVTAAKTLLDKTAGSNDNKVAVEQALQRVNTAKTALNGDARLNEAKNTAKQQLATMSHLTNAQKANLTEQIERGTTVAGVQGIQANAGTLNQAMNQLRQSIASKDATKSSEDYQDANADLQNAYNDAVTNAEGIISATNNPEMNPDTINQKASQVNSAKSALNGDEKLAAVKQTAKSDIGRLTDLNNAQRTAANAEVDQAPNLAAVTAAKNKATSLNTAMGNLKHALAEKDNTKRSVNYTDADQPKQQAYDTAVTQAEAITNANGSNANETQVQAALNQLNQAKNDLNGDNKVAQAKETAKRALASYSNLNNAQSTAATSQIDNATTVADVTAAQNTANELNTAMGQLQNGINDQNTVKQQVNFTDADQGKKDAYTNAVTNAQGILDKANGQNMTKAQVEAALNQVTTAKNALNGDANVRQAKSDAKANLGTLTHLNNAQKQDLTSQIEGATTVNGVNSVKTKAQDLDGAMQRLESAIANKDQTKASENYIDADPTKKTAFDNAITQAESYLNKDHGTNKDKQAVEQAIQSVTSTENALNGDANLQCAKTEATQAIDNLTQLNTPQKTALKQQVNAAQRVSGVTDLKNSATSLNNAMDQLKQAIGDHDTIVAGGNYTNASPDKQGAYTDAYNAAKNIVNGSPNVITNAADVTAATQRVNNAETSLNGDTNLATAKQQAKDALRQMTHLSDAQKQSITGQIDSATQVTGVQSVKDNATNLDNAMNQLRNSIANKDEVKASQPYVDADTDKQNAYNTAVTSAENIINATSQPTLDPSAVTQAANQVNTNKTALNGAQNLANKKQETTANINRLSHLNNAQKQDLNTQVTNAPNISTVNQVKTKAEQLDQAMERLINGIQDKDQVKQSVNFTDADPEKQTAYNNAVTAAENIINQANGTNANQSQVEAALSTVTTTKQALNGDRKVTDAKNNANQTLSTLDNLNNAQKGAVTGNINQAHTVAEVTQAIQTAQELNTAMGNLKNSLNDKDTTLGSQNFADADPEKKNAYNEAVRNAENILNKSTGTNVPKDQVEAAMNQVNTTKAALNGTQNLEKAKQHANTAIDGLSHLTNAQKEALKQLVQQSTTVAEAQGNEQKANNVDAAMDKLRQSIADNATTKQNQNYTDASPNKKDAYNNAVTTAQGIIDQTTNPSLDPTVINQAAGQVSTSKNALNGNENLEAAKQQATQSLGSLDNLNNAQKQAVTNQINGAHTVDEANQIKQNAQNLNTAMGNLKQAIADKDATKATVNFTDADQAKQQAYNTAVTNAENIISKANGGNATQTEVEQAIQQVNAAKQALNGNANVQHAKDEATALINNSNDLNQAQKDALKQQVQNATTVAGVNNVKQTAQELNNAMTQLKQGIADKEQTKADGNFVNADSDKQNAYNQAVAKAEALISGTPDVVVTPSEITAALNKVTQAKNDLNGNTNLATAKQNVQHAIDQLPNLNQAQRDEYSKQITQATLVPNVNAIQQAATTLNDAMTQLKQGIANKAQIKGSENYHDADTDKQTAYDNAVTKAEELLKQTTNPTMDPNTIQQALTKVNDTNQALNGNQKLADAKQDAKTTLGTLDHLNDAQKQALTTQVEQAPDIATVNNVKQNAQNLNNAMTNLNNALQDKTETLNSINFTDADQAKKDDYTNAVSHAEGILSKANGSNASQTEVEQAMQRVNEAKQALNGNDNVQRAKDAAKQVITNANDLNQAQKDALKQQVDAAQTVANVNTIKQTAQDLNQAMTQLKQGIADKDQTKANGNFVNADTDKQNAYNNAVAHAEQIISGTPNANVDPQQVAQALQQVNQAKGDLNGNHNLQVAKDNANTAIDQLPNLNQPQKTALKDQVSHAELVTGVNAIKQNADALNNAMGTLKQQIQANSQVPQSVDFTQADQDKQQAYNNAANQAQQIANGTPTPVLAPDTVTKAVTTMNQAKDALNGDEKLAQAKQDALANLDTLRDLNQPQRDALRNQINQAQALATVEQTKQNAQNVNTAMGNLKQGIANKDTVKASENYHDADVDKQTAYTNAVSQAEGIINQTTNPTLNPDDITRALTQVTDAKNSLNGEAKLATEKQNAKDAVSGMTHLNDAQKQALKGQIDQSPEIATVNQVKQTATSLDQAMDQLSQAINDKDQILADGNYLNADPDKQNAYKQAVAKAEALLNKQSGTNEVQAQVESITNEVNAAKQALNGNDNLANAKQQAKQQLANLTHLNDAQKQSFESQITQAPLVTDVTTINQKAQTLDHAMELLRNSVADNQTTLASEDYHDATAQRQNDYNKAVTAANNIINQTTSPTMNPDDVNGATTQVNNTKVALDGDENLAAAKQQANNRLDQLDHLNNAQKQQLQSQITQSSDIAAVNGHKQTAESLNTAMGNLINAIADHQAVEQRGNFINADTDKQTAYNTAVNEAAAMINKQTGQNANQTEVEQAITKVQTTLQALNGDHNLQVAKTNATQAIDVLTSLNDPQKTALKDQVTAATLVTAVHQIEQNANTLNQAMHGLRQSIQDNAATKANSKYINEDQPEQQNYDQAVQAANNIINEQTATLDNNAINQVAATVNTTKAALHGDVKLQNDKDHAKQTVSQLAHLNNAQKHMEDTLIDSETTRTAVKQDLTEVQALDQLMDALQQSIADKDATRASSAYVNAEPNKKQAYDEAVQNAESIIAGLNNPTINKGNVSSATQAVISSKNALDGVERLAQDKQTAGNSLNHLDQLTPAQQQALENQINNATTCDKVAEIIAQAQALNEAMKALKESIKDQPQTEASSKFINEDQAQKDAYTQAVQHAKDLINKTTDPTLAKSIIDQATQAVTDAKNNLHGDQKLAQDKQRATETLNNLSNLNTPQRQALENQINNAATRGEVAQKLTEAQALNQAMEALRNSIQDQQQTESGSKFINEDKPQKDAYQAAVQNAKDLINQTGNPTLDKAQVEQLTHAFKQAKDNLHGDQKLADDKQHAVTDLNQLNGLNNPQRQALESQINNAATRGEVAQKLAEAKALDQAMQALRNSIQDQQQTEAGSKFINEDKPQKDAYQAAVQNAKDLINQTGNPTLDKSQVEQLTQAVTTAKDNLHGDQKLARDQQQAVTTVNALPNLNHAQQQTLTDAINAAPTRTEVAQHVQTATELDHAMETLKNKVDQVNTDKAQPNYTEASTDKKEAVDQALQAAQSITDPTNGSNANKDAVEQALTKLQEKVNELNGNERVAEAKTQAKQTIDQLTHLNADQIATAKQNIDQATKLQPIAELVDQATQLNQSMDQLQQAVNEHANVEQTIDYTQADSDKQKAYKQAIADAENVLKQNANKQQVDQALQNILNAKQALNGDERVALAKTNGKHDIDQLNALNNAQQDGFKGRIDQSNDLNQIQQIVDEAKALNRAMDQLSQEITGNEGRTKGSTNYVNADTQVKQVYDEAVDKAKQALDKSSGQNLTAEQVIKLNDAVTAAKKALNGEERLNNRKAEALQRLDQLTHLNNAQRQLAIQQINNAETLNKASRAINRATKLDNAMGAVQQYIDEQHLGVISSTNYINADDNLKANYDNAIANAAHELDKVQGNAIAKAEAEQLKQNIIDAQNALNGDQNLANAKDKANAFVNSLNGLNQQQQDLAHKAINNADTVSDVTDIVNNQIDLNDAMETLKHLVDNEIPNAEQTVNYQNADDNAKTNFDDAKRLANTLLNSDNTNVNDINGAIQAVNDAIHNLNGDQRLQDAKDKAIQSINQALANKLKEIEASNATDQDKLIAKNKAEELANSIINNINKATSNQAVSQVQTAGNHAIEQVHANEIPKAKIDANKDVDKQVQALIDEIDRNPNLTDKEKQALKDRINQILQQGHNDINNALTKEEIEQAKAQLAQALQDIKDLVKAKEDAKQDVDKQVQALIDEIDQNPNLTDKEKQALKDRINQILQQGHNGINNAMTKEEIEQAKAQLAQALKEIKDLVKAKENAKQDVDKQVQALIDEIDQNPNLTDKEKQALKDRINQILQQGHNDINNAMTKEEIEQAKAQLAQALQDIKDLVKAKEDAKNAIKALANAKRDQINSNPDLTPEQKAKALKEIDEAEKRALQNVENAQTIDQLNRGLNLGLDDIRNTHVWEVDEQPAVNEIFEATPEQILVNGELIVHRDDIITEQDILAHINLIDQLSAEVIDTPSTATISDSLTAKVEVTLLDGSKVIVNVPVKVVEKELSVVKQQAIESIENAAQQKIDEINNSVTLTLEQKEAAIAEVNKLKQQAIDHVNNAPDVHSVEEIQQQEQAYIEQFNPEQFTIEQAKSNAIKSIEDAIQHMIDEIKARTDLTDKEKQEAIAKLNQLKEQAIQAIQRAQSISEITEQLEQFKAQMKAANPTAKELAKRKQEAISRIKDFSNEKINSIRNSEIGTADEKQAAMNQINEIVLETIRDINNAHTLQQVEAALNNGIARISAVQIVISDRAKQSSSTGNESNSHLTIGYGTANHPFNSSTIGHKKKLDEDDDIDPLHMRHFSNNFGNVIKNAIGVVGISGLLASFWFFIAKRRRKEDEEEELEIRDNNKDSIKETLDDTKHLPLLFAKRRRKEDEEDVTVEEKDSLNNGESLDKVKHTPFFLPKRRRKEDEEDVEVTNENTDEKVLKDNEHSPLLFAKRRKDKEEDVETTTSIESKDEDVPLLLAKKKNQKDNQSKDKKSASKNTSKKVAAKKKKKKSKKNKK</sequence>
<proteinExistence type="predicted"/>
<organism>
    <name type="scientific">Staphylococcus aureus (strain Mu3 / ATCC 700698)</name>
    <dbReference type="NCBI Taxonomy" id="418127"/>
    <lineage>
        <taxon>Bacteria</taxon>
        <taxon>Bacillati</taxon>
        <taxon>Bacillota</taxon>
        <taxon>Bacilli</taxon>
        <taxon>Bacillales</taxon>
        <taxon>Staphylococcaceae</taxon>
        <taxon>Staphylococcus</taxon>
    </lineage>
</organism>
<evidence type="ECO:0000255" key="1"/>
<evidence type="ECO:0000256" key="2">
    <source>
        <dbReference type="SAM" id="MobiDB-lite"/>
    </source>
</evidence>
<evidence type="ECO:0000305" key="3"/>
<reference key="1">
    <citation type="journal article" date="2008" name="Antimicrob. Agents Chemother.">
        <title>Mutated response regulator graR is responsible for phenotypic conversion of Staphylococcus aureus from heterogeneous vancomycin-intermediate resistance to vancomycin-intermediate resistance.</title>
        <authorList>
            <person name="Neoh H.-M."/>
            <person name="Cui L."/>
            <person name="Yuzawa H."/>
            <person name="Takeuchi F."/>
            <person name="Matsuo M."/>
            <person name="Hiramatsu K."/>
        </authorList>
    </citation>
    <scope>NUCLEOTIDE SEQUENCE [LARGE SCALE GENOMIC DNA]</scope>
    <source>
        <strain>Mu3 / ATCC 700698</strain>
    </source>
</reference>